<proteinExistence type="inferred from homology"/>
<organism>
    <name type="scientific">Brucella suis biovar 1 (strain 1330)</name>
    <dbReference type="NCBI Taxonomy" id="204722"/>
    <lineage>
        <taxon>Bacteria</taxon>
        <taxon>Pseudomonadati</taxon>
        <taxon>Pseudomonadota</taxon>
        <taxon>Alphaproteobacteria</taxon>
        <taxon>Hyphomicrobiales</taxon>
        <taxon>Brucellaceae</taxon>
        <taxon>Brucella/Ochrobactrum group</taxon>
        <taxon>Brucella</taxon>
    </lineage>
</organism>
<feature type="chain" id="PRO_0000361904" description="Cell-division control histidine kinase PdhS">
    <location>
        <begin position="1"/>
        <end position="1035"/>
    </location>
</feature>
<feature type="domain" description="PAS" evidence="3">
    <location>
        <begin position="659"/>
        <end position="730"/>
    </location>
</feature>
<feature type="domain" description="Histidine kinase" evidence="2">
    <location>
        <begin position="802"/>
        <end position="1031"/>
    </location>
</feature>
<feature type="region of interest" description="Important for polar localization" evidence="1">
    <location>
        <begin position="1"/>
        <end position="613"/>
    </location>
</feature>
<feature type="region of interest" description="Disordered" evidence="4">
    <location>
        <begin position="500"/>
        <end position="533"/>
    </location>
</feature>
<feature type="region of interest" description="Interaction with DivK" evidence="1">
    <location>
        <begin position="614"/>
        <end position="1035"/>
    </location>
</feature>
<feature type="modified residue" description="Phosphohistidine; by autocatalysis" evidence="2">
    <location>
        <position position="805"/>
    </location>
</feature>
<dbReference type="EC" id="2.7.13.3"/>
<dbReference type="EMBL" id="AE014291">
    <property type="protein sequence ID" value="AAN30511.1"/>
    <property type="molecule type" value="Genomic_DNA"/>
</dbReference>
<dbReference type="EMBL" id="CP002997">
    <property type="protein sequence ID" value="AEM18927.1"/>
    <property type="molecule type" value="Genomic_DNA"/>
</dbReference>
<dbReference type="RefSeq" id="WP_006190713.1">
    <property type="nucleotide sequence ID" value="NZ_KN046804.1"/>
</dbReference>
<dbReference type="SMR" id="Q8FZ86"/>
<dbReference type="GeneID" id="45052594"/>
<dbReference type="KEGG" id="bms:BR1606"/>
<dbReference type="KEGG" id="bsi:BS1330_I1600"/>
<dbReference type="PATRIC" id="fig|204722.21.peg.3518"/>
<dbReference type="HOGENOM" id="CLU_000445_23_0_5"/>
<dbReference type="PhylomeDB" id="Q8FZ86"/>
<dbReference type="Proteomes" id="UP000007104">
    <property type="component" value="Chromosome I"/>
</dbReference>
<dbReference type="GO" id="GO:0005737">
    <property type="term" value="C:cytoplasm"/>
    <property type="evidence" value="ECO:0007669"/>
    <property type="project" value="UniProtKB-SubCell"/>
</dbReference>
<dbReference type="GO" id="GO:0005886">
    <property type="term" value="C:plasma membrane"/>
    <property type="evidence" value="ECO:0007669"/>
    <property type="project" value="TreeGrafter"/>
</dbReference>
<dbReference type="GO" id="GO:0005524">
    <property type="term" value="F:ATP binding"/>
    <property type="evidence" value="ECO:0007669"/>
    <property type="project" value="UniProtKB-KW"/>
</dbReference>
<dbReference type="GO" id="GO:0009927">
    <property type="term" value="F:histidine phosphotransfer kinase activity"/>
    <property type="evidence" value="ECO:0007669"/>
    <property type="project" value="TreeGrafter"/>
</dbReference>
<dbReference type="GO" id="GO:0000155">
    <property type="term" value="F:phosphorelay sensor kinase activity"/>
    <property type="evidence" value="ECO:0007669"/>
    <property type="project" value="InterPro"/>
</dbReference>
<dbReference type="GO" id="GO:0051301">
    <property type="term" value="P:cell division"/>
    <property type="evidence" value="ECO:0007669"/>
    <property type="project" value="UniProtKB-KW"/>
</dbReference>
<dbReference type="GO" id="GO:0006355">
    <property type="term" value="P:regulation of DNA-templated transcription"/>
    <property type="evidence" value="ECO:0007669"/>
    <property type="project" value="InterPro"/>
</dbReference>
<dbReference type="CDD" id="cd00082">
    <property type="entry name" value="HisKA"/>
    <property type="match status" value="1"/>
</dbReference>
<dbReference type="CDD" id="cd00130">
    <property type="entry name" value="PAS"/>
    <property type="match status" value="1"/>
</dbReference>
<dbReference type="Gene3D" id="1.10.287.130">
    <property type="match status" value="1"/>
</dbReference>
<dbReference type="Gene3D" id="3.30.565.10">
    <property type="entry name" value="Histidine kinase-like ATPase, C-terminal domain"/>
    <property type="match status" value="1"/>
</dbReference>
<dbReference type="Gene3D" id="3.30.450.20">
    <property type="entry name" value="PAS domain"/>
    <property type="match status" value="1"/>
</dbReference>
<dbReference type="InterPro" id="IPR036890">
    <property type="entry name" value="HATPase_C_sf"/>
</dbReference>
<dbReference type="InterPro" id="IPR005467">
    <property type="entry name" value="His_kinase_dom"/>
</dbReference>
<dbReference type="InterPro" id="IPR003661">
    <property type="entry name" value="HisK_dim/P_dom"/>
</dbReference>
<dbReference type="InterPro" id="IPR036097">
    <property type="entry name" value="HisK_dim/P_sf"/>
</dbReference>
<dbReference type="InterPro" id="IPR000014">
    <property type="entry name" value="PAS"/>
</dbReference>
<dbReference type="InterPro" id="IPR035965">
    <property type="entry name" value="PAS-like_dom_sf"/>
</dbReference>
<dbReference type="InterPro" id="IPR013767">
    <property type="entry name" value="PAS_fold"/>
</dbReference>
<dbReference type="InterPro" id="IPR048231">
    <property type="entry name" value="PdhS_histid_kinase"/>
</dbReference>
<dbReference type="InterPro" id="IPR004358">
    <property type="entry name" value="Sig_transdc_His_kin-like_C"/>
</dbReference>
<dbReference type="NCBIfam" id="NF041593">
    <property type="entry name" value="histid_kinase_PdhS"/>
    <property type="match status" value="1"/>
</dbReference>
<dbReference type="NCBIfam" id="TIGR00229">
    <property type="entry name" value="sensory_box"/>
    <property type="match status" value="1"/>
</dbReference>
<dbReference type="PANTHER" id="PTHR43047:SF72">
    <property type="entry name" value="OSMOSENSING HISTIDINE PROTEIN KINASE SLN1"/>
    <property type="match status" value="1"/>
</dbReference>
<dbReference type="PANTHER" id="PTHR43047">
    <property type="entry name" value="TWO-COMPONENT HISTIDINE PROTEIN KINASE"/>
    <property type="match status" value="1"/>
</dbReference>
<dbReference type="Pfam" id="PF02518">
    <property type="entry name" value="HATPase_c"/>
    <property type="match status" value="1"/>
</dbReference>
<dbReference type="Pfam" id="PF00512">
    <property type="entry name" value="HisKA"/>
    <property type="match status" value="1"/>
</dbReference>
<dbReference type="Pfam" id="PF00989">
    <property type="entry name" value="PAS"/>
    <property type="match status" value="1"/>
</dbReference>
<dbReference type="Pfam" id="PF13188">
    <property type="entry name" value="PAS_8"/>
    <property type="match status" value="1"/>
</dbReference>
<dbReference type="PRINTS" id="PR00344">
    <property type="entry name" value="BCTRLSENSOR"/>
</dbReference>
<dbReference type="SMART" id="SM00387">
    <property type="entry name" value="HATPase_c"/>
    <property type="match status" value="1"/>
</dbReference>
<dbReference type="SMART" id="SM00388">
    <property type="entry name" value="HisKA"/>
    <property type="match status" value="1"/>
</dbReference>
<dbReference type="SMART" id="SM00091">
    <property type="entry name" value="PAS"/>
    <property type="match status" value="2"/>
</dbReference>
<dbReference type="SUPFAM" id="SSF55874">
    <property type="entry name" value="ATPase domain of HSP90 chaperone/DNA topoisomerase II/histidine kinase"/>
    <property type="match status" value="1"/>
</dbReference>
<dbReference type="SUPFAM" id="SSF47384">
    <property type="entry name" value="Homodimeric domain of signal transducing histidine kinase"/>
    <property type="match status" value="1"/>
</dbReference>
<dbReference type="SUPFAM" id="SSF55785">
    <property type="entry name" value="PYP-like sensor domain (PAS domain)"/>
    <property type="match status" value="1"/>
</dbReference>
<dbReference type="PROSITE" id="PS50109">
    <property type="entry name" value="HIS_KIN"/>
    <property type="match status" value="1"/>
</dbReference>
<dbReference type="PROSITE" id="PS50112">
    <property type="entry name" value="PAS"/>
    <property type="match status" value="1"/>
</dbReference>
<evidence type="ECO:0000250" key="1"/>
<evidence type="ECO:0000255" key="2">
    <source>
        <dbReference type="PROSITE-ProRule" id="PRU00107"/>
    </source>
</evidence>
<evidence type="ECO:0000255" key="3">
    <source>
        <dbReference type="PROSITE-ProRule" id="PRU00140"/>
    </source>
</evidence>
<evidence type="ECO:0000256" key="4">
    <source>
        <dbReference type="SAM" id="MobiDB-lite"/>
    </source>
</evidence>
<accession>Q8FZ86</accession>
<accession>G0K6E3</accession>
<keyword id="KW-0067">ATP-binding</keyword>
<keyword id="KW-0131">Cell cycle</keyword>
<keyword id="KW-0132">Cell division</keyword>
<keyword id="KW-0963">Cytoplasm</keyword>
<keyword id="KW-0418">Kinase</keyword>
<keyword id="KW-0547">Nucleotide-binding</keyword>
<keyword id="KW-0597">Phosphoprotein</keyword>
<keyword id="KW-0808">Transferase</keyword>
<name>PDHS_BRUSU</name>
<reference key="1">
    <citation type="journal article" date="2002" name="Proc. Natl. Acad. Sci. U.S.A.">
        <title>The Brucella suis genome reveals fundamental similarities between animal and plant pathogens and symbionts.</title>
        <authorList>
            <person name="Paulsen I.T."/>
            <person name="Seshadri R."/>
            <person name="Nelson K.E."/>
            <person name="Eisen J.A."/>
            <person name="Heidelberg J.F."/>
            <person name="Read T.D."/>
            <person name="Dodson R.J."/>
            <person name="Umayam L.A."/>
            <person name="Brinkac L.M."/>
            <person name="Beanan M.J."/>
            <person name="Daugherty S.C."/>
            <person name="DeBoy R.T."/>
            <person name="Durkin A.S."/>
            <person name="Kolonay J.F."/>
            <person name="Madupu R."/>
            <person name="Nelson W.C."/>
            <person name="Ayodeji B."/>
            <person name="Kraul M."/>
            <person name="Shetty J."/>
            <person name="Malek J.A."/>
            <person name="Van Aken S.E."/>
            <person name="Riedmuller S."/>
            <person name="Tettelin H."/>
            <person name="Gill S.R."/>
            <person name="White O."/>
            <person name="Salzberg S.L."/>
            <person name="Hoover D.L."/>
            <person name="Lindler L.E."/>
            <person name="Halling S.M."/>
            <person name="Boyle S.M."/>
            <person name="Fraser C.M."/>
        </authorList>
    </citation>
    <scope>NUCLEOTIDE SEQUENCE [LARGE SCALE GENOMIC DNA]</scope>
    <source>
        <strain>1330</strain>
    </source>
</reference>
<reference key="2">
    <citation type="journal article" date="2011" name="J. Bacteriol.">
        <title>Revised genome sequence of Brucella suis 1330.</title>
        <authorList>
            <person name="Tae H."/>
            <person name="Shallom S."/>
            <person name="Settlage R."/>
            <person name="Preston D."/>
            <person name="Adams L.G."/>
            <person name="Garner H.R."/>
        </authorList>
    </citation>
    <scope>NUCLEOTIDE SEQUENCE [LARGE SCALE GENOMIC DNA]</scope>
    <source>
        <strain>1330</strain>
    </source>
</reference>
<sequence>MSGSYPFIDIAALDSVREGFARGDAQLVLAHDLSTVLWVNGPGAKLFGYNRVEDLIEGQLDLPVATRRQIAAFSSENTSAPSAVAVRLGGGLRSELTHLHVSNIKLPDGVAALLVATQMPDNSAEAAISGLGDDSTHIALVDAVGKVVAASPRFALLDISASTLEDLIVEAGDATDRIVKRRIRTGSHSVPGAIARLTDTPALHLLCIVGDAPAQFQTAAEAVPLPDNAEAVLEEILPEQGDAPAQQAQKTHAEQPRPKTFAFDHDAPPARFIWKVGPDGTFSEISPDLAAVVGPNSADIVGRRFSDVANVFGFYTDGSIAALLLERDTWSGKRLLWPVEGTRLRVPVELAALPVYSRDREFLGFRGFGIVRPAEAEADPEEIGLALAGGIPQNRKPRKEPAETARMVGEDDVLALSEEVANDDQPAAVLPKPPLDITPTPGRRDSDKVISLLNSCAQEKVAADQAKFLKEKERATRPEGGLTKTERNAFREIAERLRKQGLANTRAESETPVSETSSIEPVEPTPPVKTRSEPIQPDETALLANLPVPVIIHSGDAIHYVNQALLDITGYESLDDIRSAGGVDVLFNSESDDGETRQSMVLRHADGSEEPVDAHLNAIAWRGGRALMLSLMPVTAADLPAPAELPAANDEEKQALEAHVEELKTILDTATDGVVLIDPEGRIRSMNHSASALFGYERDEAEGKFFSMLFAIESQRAAMDYLHGLSGNGVLSVLNDGREVIGREAKGGFIPLFMTIGKLPHTRGFCAVLRDITQWKRTEEELTNARKEAERASNQKTEFLARISHEIRTPLNAIIGFSELMADEKFGPIGNDRYRDYLRDINRSGNHVLALVNDLLDISKIEAGALDMQFEAVSLNDAIGEAIALMQPQANRERVIIRSSFQSNLPDIVADSRSIKQVALNLLSNAVRFTAPGGQVIVSTSYELNGDVVMRVRDTGIGMSKSEVEQALKPFRQINALEGRKAESAKDWRNEGTGLGLPLTKAMVEANRAQFAIDSNPGQGTVVEIVFPPTRVLAD</sequence>
<comment type="function">
    <text evidence="1">Functions as a polar differentiation marker. Essential protein that, by localizing in the old pole of dividing cells, controls cell division and maturation, probably through control of DivK phosphorylation status and cellular distribution, which in turn regulates CtrA, a transcriptional regulator of the minB operon. The asymmetrical localization of this protein is probably required for cells to enter a new division cycle (By similarity).</text>
</comment>
<comment type="catalytic activity">
    <reaction>
        <text>ATP + protein L-histidine = ADP + protein N-phospho-L-histidine.</text>
        <dbReference type="EC" id="2.7.13.3"/>
    </reaction>
</comment>
<comment type="subunit">
    <text evidence="1">Interacts with DivK.</text>
</comment>
<comment type="subcellular location">
    <subcellularLocation>
        <location evidence="1">Cytoplasm</location>
    </subcellularLocation>
    <text evidence="1">Localizes at the old pole of dividing cells. Colocalizes with DivK (By similarity).</text>
</comment>
<gene>
    <name type="primary">pdhS</name>
    <name type="ordered locus">BR1606</name>
    <name type="ordered locus">BS1330_I1600</name>
</gene>
<protein>
    <recommendedName>
        <fullName>Cell-division control histidine kinase PdhS</fullName>
        <ecNumber>2.7.13.3</ecNumber>
    </recommendedName>
</protein>